<feature type="chain" id="PRO_0000425992" description="DNA replication licensing factor MCM4">
    <location>
        <begin position="1"/>
        <end position="862"/>
    </location>
</feature>
<feature type="domain" description="MCM">
    <location>
        <begin position="453"/>
        <end position="659"/>
    </location>
</feature>
<feature type="zinc finger region" description="C4-type" evidence="2">
    <location>
        <begin position="289"/>
        <end position="317"/>
    </location>
</feature>
<feature type="region of interest" description="Disordered" evidence="3">
    <location>
        <begin position="1"/>
        <end position="132"/>
    </location>
</feature>
<feature type="short sequence motif" description="Arginine finger">
    <location>
        <begin position="635"/>
        <end position="638"/>
    </location>
</feature>
<feature type="compositionally biased region" description="Gly residues" evidence="3">
    <location>
        <begin position="1"/>
        <end position="12"/>
    </location>
</feature>
<feature type="compositionally biased region" description="Low complexity" evidence="3">
    <location>
        <begin position="20"/>
        <end position="41"/>
    </location>
</feature>
<feature type="compositionally biased region" description="Low complexity" evidence="3">
    <location>
        <begin position="52"/>
        <end position="64"/>
    </location>
</feature>
<feature type="binding site" evidence="1">
    <location>
        <begin position="503"/>
        <end position="510"/>
    </location>
    <ligand>
        <name>ATP</name>
        <dbReference type="ChEBI" id="CHEBI:30616"/>
    </ligand>
</feature>
<comment type="function">
    <text evidence="1">Probable component of the MCM2-7 complex (MCM complex) that may function as a DNA helicase and which is essential to undergo a single round of replication initiation and elongation per cell cycle in eukaryotic cells.</text>
</comment>
<comment type="catalytic activity">
    <reaction>
        <text>ATP + H2O = ADP + phosphate + H(+)</text>
        <dbReference type="Rhea" id="RHEA:13065"/>
        <dbReference type="ChEBI" id="CHEBI:15377"/>
        <dbReference type="ChEBI" id="CHEBI:15378"/>
        <dbReference type="ChEBI" id="CHEBI:30616"/>
        <dbReference type="ChEBI" id="CHEBI:43474"/>
        <dbReference type="ChEBI" id="CHEBI:456216"/>
        <dbReference type="EC" id="3.6.4.12"/>
    </reaction>
</comment>
<comment type="subunit">
    <text evidence="1">Component of the minichromosome maintenance (MCM) complex, a heterotetramer composed of MCM2, MCM3, MCM4, MCM5, MCM6 and MCM7.</text>
</comment>
<comment type="subcellular location">
    <subcellularLocation>
        <location evidence="4">Nucleus</location>
    </subcellularLocation>
</comment>
<comment type="similarity">
    <text evidence="4">Belongs to the MCM family.</text>
</comment>
<comment type="sequence caution" evidence="4">
    <conflict type="erroneous gene model prediction">
        <sequence resource="EMBL-CDS" id="BAD88098"/>
    </conflict>
</comment>
<reference key="1">
    <citation type="journal article" date="2002" name="Nature">
        <title>The genome sequence and structure of rice chromosome 1.</title>
        <authorList>
            <person name="Sasaki T."/>
            <person name="Matsumoto T."/>
            <person name="Yamamoto K."/>
            <person name="Sakata K."/>
            <person name="Baba T."/>
            <person name="Katayose Y."/>
            <person name="Wu J."/>
            <person name="Niimura Y."/>
            <person name="Cheng Z."/>
            <person name="Nagamura Y."/>
            <person name="Antonio B.A."/>
            <person name="Kanamori H."/>
            <person name="Hosokawa S."/>
            <person name="Masukawa M."/>
            <person name="Arikawa K."/>
            <person name="Chiden Y."/>
            <person name="Hayashi M."/>
            <person name="Okamoto M."/>
            <person name="Ando T."/>
            <person name="Aoki H."/>
            <person name="Arita K."/>
            <person name="Hamada M."/>
            <person name="Harada C."/>
            <person name="Hijishita S."/>
            <person name="Honda M."/>
            <person name="Ichikawa Y."/>
            <person name="Idonuma A."/>
            <person name="Iijima M."/>
            <person name="Ikeda M."/>
            <person name="Ikeno M."/>
            <person name="Ito S."/>
            <person name="Ito T."/>
            <person name="Ito Y."/>
            <person name="Ito Y."/>
            <person name="Iwabuchi A."/>
            <person name="Kamiya K."/>
            <person name="Karasawa W."/>
            <person name="Katagiri S."/>
            <person name="Kikuta A."/>
            <person name="Kobayashi N."/>
            <person name="Kono I."/>
            <person name="Machita K."/>
            <person name="Maehara T."/>
            <person name="Mizuno H."/>
            <person name="Mizubayashi T."/>
            <person name="Mukai Y."/>
            <person name="Nagasaki H."/>
            <person name="Nakashima M."/>
            <person name="Nakama Y."/>
            <person name="Nakamichi Y."/>
            <person name="Nakamura M."/>
            <person name="Namiki N."/>
            <person name="Negishi M."/>
            <person name="Ohta I."/>
            <person name="Ono N."/>
            <person name="Saji S."/>
            <person name="Sakai K."/>
            <person name="Shibata M."/>
            <person name="Shimokawa T."/>
            <person name="Shomura A."/>
            <person name="Song J."/>
            <person name="Takazaki Y."/>
            <person name="Terasawa K."/>
            <person name="Tsuji K."/>
            <person name="Waki K."/>
            <person name="Yamagata H."/>
            <person name="Yamane H."/>
            <person name="Yoshiki S."/>
            <person name="Yoshihara R."/>
            <person name="Yukawa K."/>
            <person name="Zhong H."/>
            <person name="Iwama H."/>
            <person name="Endo T."/>
            <person name="Ito H."/>
            <person name="Hahn J.H."/>
            <person name="Kim H.-I."/>
            <person name="Eun M.-Y."/>
            <person name="Yano M."/>
            <person name="Jiang J."/>
            <person name="Gojobori T."/>
        </authorList>
    </citation>
    <scope>NUCLEOTIDE SEQUENCE [LARGE SCALE GENOMIC DNA]</scope>
    <source>
        <strain>cv. Nipponbare</strain>
    </source>
</reference>
<reference key="2">
    <citation type="journal article" date="2005" name="Nature">
        <title>The map-based sequence of the rice genome.</title>
        <authorList>
            <consortium name="International rice genome sequencing project (IRGSP)"/>
        </authorList>
    </citation>
    <scope>NUCLEOTIDE SEQUENCE [LARGE SCALE GENOMIC DNA]</scope>
    <source>
        <strain>cv. Nipponbare</strain>
    </source>
</reference>
<reference key="3">
    <citation type="journal article" date="2013" name="Rice">
        <title>Improvement of the Oryza sativa Nipponbare reference genome using next generation sequence and optical map data.</title>
        <authorList>
            <person name="Kawahara Y."/>
            <person name="de la Bastide M."/>
            <person name="Hamilton J.P."/>
            <person name="Kanamori H."/>
            <person name="McCombie W.R."/>
            <person name="Ouyang S."/>
            <person name="Schwartz D.C."/>
            <person name="Tanaka T."/>
            <person name="Wu J."/>
            <person name="Zhou S."/>
            <person name="Childs K.L."/>
            <person name="Davidson R.M."/>
            <person name="Lin H."/>
            <person name="Quesada-Ocampo L."/>
            <person name="Vaillancourt B."/>
            <person name="Sakai H."/>
            <person name="Lee S.S."/>
            <person name="Kim J."/>
            <person name="Numa H."/>
            <person name="Itoh T."/>
            <person name="Buell C.R."/>
            <person name="Matsumoto T."/>
        </authorList>
    </citation>
    <scope>GENOME REANNOTATION</scope>
    <source>
        <strain>cv. Nipponbare</strain>
    </source>
</reference>
<reference key="4">
    <citation type="journal article" date="2007" name="Plant Physiol.">
        <title>Genome-wide analysis of the core DNA replication machinery in the higher plants Arabidopsis and rice.</title>
        <authorList>
            <person name="Shultz R.W."/>
            <person name="Tatineni V.M."/>
            <person name="Hanley-Bowdoin L."/>
            <person name="Thompson W.F."/>
        </authorList>
    </citation>
    <scope>GENE FAMILY</scope>
</reference>
<evidence type="ECO:0000250" key="1"/>
<evidence type="ECO:0000255" key="2"/>
<evidence type="ECO:0000256" key="3">
    <source>
        <dbReference type="SAM" id="MobiDB-lite"/>
    </source>
</evidence>
<evidence type="ECO:0000305" key="4"/>
<protein>
    <recommendedName>
        <fullName>DNA replication licensing factor MCM4</fullName>
        <ecNumber>3.6.4.12</ecNumber>
    </recommendedName>
    <alternativeName>
        <fullName>Minichromosome maintenance protein 4</fullName>
        <shortName>OsMCM4</shortName>
    </alternativeName>
</protein>
<organism>
    <name type="scientific">Oryza sativa subsp. japonica</name>
    <name type="common">Rice</name>
    <dbReference type="NCBI Taxonomy" id="39947"/>
    <lineage>
        <taxon>Eukaryota</taxon>
        <taxon>Viridiplantae</taxon>
        <taxon>Streptophyta</taxon>
        <taxon>Embryophyta</taxon>
        <taxon>Tracheophyta</taxon>
        <taxon>Spermatophyta</taxon>
        <taxon>Magnoliopsida</taxon>
        <taxon>Liliopsida</taxon>
        <taxon>Poales</taxon>
        <taxon>Poaceae</taxon>
        <taxon>BOP clade</taxon>
        <taxon>Oryzoideae</taxon>
        <taxon>Oryzeae</taxon>
        <taxon>Oryzinae</taxon>
        <taxon>Oryza</taxon>
        <taxon>Oryza sativa</taxon>
    </lineage>
</organism>
<name>MCM4_ORYSJ</name>
<keyword id="KW-0067">ATP-binding</keyword>
<keyword id="KW-0131">Cell cycle</keyword>
<keyword id="KW-0235">DNA replication</keyword>
<keyword id="KW-0238">DNA-binding</keyword>
<keyword id="KW-0347">Helicase</keyword>
<keyword id="KW-0378">Hydrolase</keyword>
<keyword id="KW-0479">Metal-binding</keyword>
<keyword id="KW-0547">Nucleotide-binding</keyword>
<keyword id="KW-0539">Nucleus</keyword>
<keyword id="KW-1185">Reference proteome</keyword>
<keyword id="KW-0862">Zinc</keyword>
<keyword id="KW-0863">Zinc-finger</keyword>
<accession>Q5JKB0</accession>
<accession>A0A0P0V3T1</accession>
<dbReference type="EC" id="3.6.4.12"/>
<dbReference type="EMBL" id="AP004232">
    <property type="protein sequence ID" value="BAD88098.1"/>
    <property type="status" value="ALT_SEQ"/>
    <property type="molecule type" value="Genomic_DNA"/>
</dbReference>
<dbReference type="EMBL" id="AP014957">
    <property type="protein sequence ID" value="BAS72587.1"/>
    <property type="molecule type" value="Genomic_DNA"/>
</dbReference>
<dbReference type="RefSeq" id="XP_015630179.1">
    <property type="nucleotide sequence ID" value="XM_015774693.1"/>
</dbReference>
<dbReference type="SMR" id="Q5JKB0"/>
<dbReference type="FunCoup" id="Q5JKB0">
    <property type="interactions" value="2252"/>
</dbReference>
<dbReference type="STRING" id="39947.Q5JKB0"/>
<dbReference type="PaxDb" id="39947-Q5JKB0"/>
<dbReference type="EnsemblPlants" id="Os01t0544450-01">
    <property type="protein sequence ID" value="Os01t0544450-01"/>
    <property type="gene ID" value="Os01g0544450"/>
</dbReference>
<dbReference type="Gramene" id="Os01t0544450-01">
    <property type="protein sequence ID" value="Os01t0544450-01"/>
    <property type="gene ID" value="Os01g0544450"/>
</dbReference>
<dbReference type="eggNOG" id="KOG0478">
    <property type="taxonomic scope" value="Eukaryota"/>
</dbReference>
<dbReference type="HOGENOM" id="CLU_000995_7_2_1"/>
<dbReference type="InParanoid" id="Q5JKB0"/>
<dbReference type="OMA" id="AFFKCNV"/>
<dbReference type="OrthoDB" id="10251574at2759"/>
<dbReference type="PlantReactome" id="R-OSA-9640882">
    <property type="pathway name" value="Assembly of pre-replication complex"/>
</dbReference>
<dbReference type="PlantReactome" id="R-OSA-9645850">
    <property type="pathway name" value="Activation of pre-replication complex"/>
</dbReference>
<dbReference type="PlantReactome" id="R-OSA-9675824">
    <property type="pathway name" value="DNA replication Initiation"/>
</dbReference>
<dbReference type="Proteomes" id="UP000000763">
    <property type="component" value="Chromosome 1"/>
</dbReference>
<dbReference type="Proteomes" id="UP000059680">
    <property type="component" value="Chromosome 1"/>
</dbReference>
<dbReference type="GO" id="GO:0000785">
    <property type="term" value="C:chromatin"/>
    <property type="evidence" value="ECO:0007669"/>
    <property type="project" value="EnsemblPlants"/>
</dbReference>
<dbReference type="GO" id="GO:0042555">
    <property type="term" value="C:MCM complex"/>
    <property type="evidence" value="ECO:0000318"/>
    <property type="project" value="GO_Central"/>
</dbReference>
<dbReference type="GO" id="GO:0005634">
    <property type="term" value="C:nucleus"/>
    <property type="evidence" value="ECO:0000318"/>
    <property type="project" value="GO_Central"/>
</dbReference>
<dbReference type="GO" id="GO:0000347">
    <property type="term" value="C:THO complex"/>
    <property type="evidence" value="ECO:0007669"/>
    <property type="project" value="EnsemblPlants"/>
</dbReference>
<dbReference type="GO" id="GO:0005524">
    <property type="term" value="F:ATP binding"/>
    <property type="evidence" value="ECO:0007669"/>
    <property type="project" value="UniProtKB-KW"/>
</dbReference>
<dbReference type="GO" id="GO:0016887">
    <property type="term" value="F:ATP hydrolysis activity"/>
    <property type="evidence" value="ECO:0007669"/>
    <property type="project" value="InterPro"/>
</dbReference>
<dbReference type="GO" id="GO:0003678">
    <property type="term" value="F:DNA helicase activity"/>
    <property type="evidence" value="ECO:0007669"/>
    <property type="project" value="InterPro"/>
</dbReference>
<dbReference type="GO" id="GO:0003697">
    <property type="term" value="F:single-stranded DNA binding"/>
    <property type="evidence" value="ECO:0000318"/>
    <property type="project" value="GO_Central"/>
</dbReference>
<dbReference type="GO" id="GO:0008270">
    <property type="term" value="F:zinc ion binding"/>
    <property type="evidence" value="ECO:0007669"/>
    <property type="project" value="UniProtKB-KW"/>
</dbReference>
<dbReference type="GO" id="GO:0006260">
    <property type="term" value="P:DNA replication"/>
    <property type="evidence" value="ECO:0000318"/>
    <property type="project" value="GO_Central"/>
</dbReference>
<dbReference type="GO" id="GO:0006271">
    <property type="term" value="P:DNA strand elongation involved in DNA replication"/>
    <property type="evidence" value="ECO:0000318"/>
    <property type="project" value="GO_Central"/>
</dbReference>
<dbReference type="GO" id="GO:0000727">
    <property type="term" value="P:double-strand break repair via break-induced replication"/>
    <property type="evidence" value="ECO:0000318"/>
    <property type="project" value="GO_Central"/>
</dbReference>
<dbReference type="GO" id="GO:1902975">
    <property type="term" value="P:mitotic DNA replication initiation"/>
    <property type="evidence" value="ECO:0000318"/>
    <property type="project" value="GO_Central"/>
</dbReference>
<dbReference type="GO" id="GO:0009555">
    <property type="term" value="P:pollen development"/>
    <property type="evidence" value="ECO:0007669"/>
    <property type="project" value="EnsemblPlants"/>
</dbReference>
<dbReference type="CDD" id="cd17755">
    <property type="entry name" value="MCM4"/>
    <property type="match status" value="1"/>
</dbReference>
<dbReference type="FunFam" id="1.10.10.10:FF:000700">
    <property type="entry name" value="DNA helicase"/>
    <property type="match status" value="1"/>
</dbReference>
<dbReference type="FunFam" id="2.20.28.10:FF:000003">
    <property type="entry name" value="DNA helicase"/>
    <property type="match status" value="1"/>
</dbReference>
<dbReference type="FunFam" id="3.30.1640.10:FF:000010">
    <property type="entry name" value="DNA helicase"/>
    <property type="match status" value="1"/>
</dbReference>
<dbReference type="FunFam" id="3.40.50.300:FF:000217">
    <property type="entry name" value="DNA helicase"/>
    <property type="match status" value="1"/>
</dbReference>
<dbReference type="Gene3D" id="2.20.28.10">
    <property type="match status" value="1"/>
</dbReference>
<dbReference type="Gene3D" id="3.30.1640.10">
    <property type="entry name" value="mini-chromosome maintenance (MCM) complex, chain A, domain 1"/>
    <property type="match status" value="1"/>
</dbReference>
<dbReference type="Gene3D" id="2.40.50.140">
    <property type="entry name" value="Nucleic acid-binding proteins"/>
    <property type="match status" value="1"/>
</dbReference>
<dbReference type="Gene3D" id="3.40.50.300">
    <property type="entry name" value="P-loop containing nucleotide triphosphate hydrolases"/>
    <property type="match status" value="1"/>
</dbReference>
<dbReference type="Gene3D" id="1.10.10.10">
    <property type="entry name" value="Winged helix-like DNA-binding domain superfamily/Winged helix DNA-binding domain"/>
    <property type="match status" value="1"/>
</dbReference>
<dbReference type="InterPro" id="IPR003593">
    <property type="entry name" value="AAA+_ATPase"/>
</dbReference>
<dbReference type="InterPro" id="IPR031327">
    <property type="entry name" value="MCM"/>
</dbReference>
<dbReference type="InterPro" id="IPR008047">
    <property type="entry name" value="MCM_4"/>
</dbReference>
<dbReference type="InterPro" id="IPR018525">
    <property type="entry name" value="MCM_CS"/>
</dbReference>
<dbReference type="InterPro" id="IPR001208">
    <property type="entry name" value="MCM_dom"/>
</dbReference>
<dbReference type="InterPro" id="IPR041562">
    <property type="entry name" value="MCM_lid"/>
</dbReference>
<dbReference type="InterPro" id="IPR027925">
    <property type="entry name" value="MCM_N"/>
</dbReference>
<dbReference type="InterPro" id="IPR033762">
    <property type="entry name" value="MCM_OB"/>
</dbReference>
<dbReference type="InterPro" id="IPR012340">
    <property type="entry name" value="NA-bd_OB-fold"/>
</dbReference>
<dbReference type="InterPro" id="IPR027417">
    <property type="entry name" value="P-loop_NTPase"/>
</dbReference>
<dbReference type="InterPro" id="IPR036388">
    <property type="entry name" value="WH-like_DNA-bd_sf"/>
</dbReference>
<dbReference type="PANTHER" id="PTHR11630">
    <property type="entry name" value="DNA REPLICATION LICENSING FACTOR MCM FAMILY MEMBER"/>
    <property type="match status" value="1"/>
</dbReference>
<dbReference type="PANTHER" id="PTHR11630:SF66">
    <property type="entry name" value="DNA REPLICATION LICENSING FACTOR MCM4"/>
    <property type="match status" value="1"/>
</dbReference>
<dbReference type="Pfam" id="PF00493">
    <property type="entry name" value="MCM"/>
    <property type="match status" value="1"/>
</dbReference>
<dbReference type="Pfam" id="PF21128">
    <property type="entry name" value="MCM4_WHD"/>
    <property type="match status" value="1"/>
</dbReference>
<dbReference type="Pfam" id="PF17855">
    <property type="entry name" value="MCM_lid"/>
    <property type="match status" value="1"/>
</dbReference>
<dbReference type="Pfam" id="PF14551">
    <property type="entry name" value="MCM_N"/>
    <property type="match status" value="1"/>
</dbReference>
<dbReference type="Pfam" id="PF17207">
    <property type="entry name" value="MCM_OB"/>
    <property type="match status" value="1"/>
</dbReference>
<dbReference type="PRINTS" id="PR01657">
    <property type="entry name" value="MCMFAMILY"/>
</dbReference>
<dbReference type="PRINTS" id="PR01660">
    <property type="entry name" value="MCMPROTEIN4"/>
</dbReference>
<dbReference type="SMART" id="SM00382">
    <property type="entry name" value="AAA"/>
    <property type="match status" value="1"/>
</dbReference>
<dbReference type="SMART" id="SM00350">
    <property type="entry name" value="MCM"/>
    <property type="match status" value="1"/>
</dbReference>
<dbReference type="SUPFAM" id="SSF50249">
    <property type="entry name" value="Nucleic acid-binding proteins"/>
    <property type="match status" value="1"/>
</dbReference>
<dbReference type="SUPFAM" id="SSF52540">
    <property type="entry name" value="P-loop containing nucleoside triphosphate hydrolases"/>
    <property type="match status" value="1"/>
</dbReference>
<dbReference type="PROSITE" id="PS00847">
    <property type="entry name" value="MCM_1"/>
    <property type="match status" value="1"/>
</dbReference>
<dbReference type="PROSITE" id="PS50051">
    <property type="entry name" value="MCM_2"/>
    <property type="match status" value="1"/>
</dbReference>
<gene>
    <name type="primary">MCM4</name>
    <name type="ordered locus">Os01g0544450</name>
    <name type="ordered locus">LOC_Os01g36390</name>
    <name type="ORF">OSJNBa0051H17.26</name>
</gene>
<sequence>MASRGGGGGGDGNSPPPSVSSPDVRPSSPLPATNSSPPQSGRRGGGRRRRGSASPYPSSPSLGGFETPPHPGRRTPSGGAAARQQRQNWTGGRFPPTPSTPMSTDDVPLSSEAGDEDTPETDGGGGGGAGADATPVFVWGTNISVQDVNAAILRFLRHFRDPRDAGRVDPVMDEGKYMRAIHRILELEGGESLDVNAHDVFDHDPDLYGKMVRYPLEVLAIFDIVLMDLVARIEPLFEKHIQTRIYNLKSSVCLRNLNPSDIEKMVSIKGMIIRCSSVIPELKEAVFRCLVCGFYSEPVMVDRGRVTEPHICQKEQCKATNSMTLVHNRCRFADKQIIKLQETPDEIPEGGTPHTVSVLMHDKLVDAGKPGDRVEITGIYRAMSIRVGPTQRTVKSIFKTYIDCLHIKKTDKSRLHVEDSMETDNPNANKTTEDDFLRDKVEKLKELSKLPDIYDRLTRSLAPNIWELDDVKRGLLCQLFGGNALRLPSGASFRGDINILLVGDPGTSKSQLLQYMHKLSPRGIYTSGRGSSAVGLTAYVTKDPETGETVLESGALVLSDKGVCCIDEFDKMSDNARSMLHEVMEQQTVSIAKAGIIASLNARTSVLACANPTESRYNPRLSVIDNIHLPPTLLSRFDLIYLILDKADEQTDRRLAKHIVSLHFENPNIEELEVLDLPTLVAYISYARKHIQPQLSDEAAEELTRGYVEMRKRGNSPGSRKKVITATARQIESLIRLSEALARMRFSEMVEVQDVVEAFRLLEVAMQQSATDHATGTIDMDLIMTGISASERQRRDNLVAATRNLVMEKMQLGGPSVRMIELLEEIRKQSSMEVHLHDLRGALGTLMTEGAVVIHGDSVKRV</sequence>
<proteinExistence type="inferred from homology"/>